<dbReference type="EMBL" id="AB190926">
    <property type="protein sequence ID" value="BAE91896.1"/>
    <property type="molecule type" value="mRNA"/>
</dbReference>
<dbReference type="EMBL" id="AY512583">
    <property type="protein sequence ID" value="AAS49495.1"/>
    <property type="molecule type" value="mRNA"/>
</dbReference>
<dbReference type="EMBL" id="AP003252">
    <property type="protein sequence ID" value="BAB89585.1"/>
    <property type="molecule type" value="Genomic_DNA"/>
</dbReference>
<dbReference type="EMBL" id="AP003734">
    <property type="protein sequence ID" value="BAB68117.1"/>
    <property type="molecule type" value="Genomic_DNA"/>
</dbReference>
<dbReference type="EMBL" id="AP008207">
    <property type="protein sequence ID" value="BAF06606.1"/>
    <property type="molecule type" value="Genomic_DNA"/>
</dbReference>
<dbReference type="EMBL" id="AP014957">
    <property type="protein sequence ID" value="BAS75046.1"/>
    <property type="molecule type" value="Genomic_DNA"/>
</dbReference>
<dbReference type="EMBL" id="AK070618">
    <property type="protein sequence ID" value="BAG92058.1"/>
    <property type="molecule type" value="mRNA"/>
</dbReference>
<dbReference type="RefSeq" id="XP_015621577.1">
    <property type="nucleotide sequence ID" value="XM_015766091.1"/>
</dbReference>
<dbReference type="SMR" id="Q941V3"/>
<dbReference type="FunCoup" id="Q941V3">
    <property type="interactions" value="45"/>
</dbReference>
<dbReference type="STRING" id="39947.Q941V3"/>
<dbReference type="TCDB" id="2.A.67.2.5">
    <property type="family name" value="the oligopeptide transporter (opt) family"/>
</dbReference>
<dbReference type="PaxDb" id="39947-Q941V3"/>
<dbReference type="EnsemblPlants" id="Os01t0829900-01">
    <property type="protein sequence ID" value="Os01t0829900-01"/>
    <property type="gene ID" value="Os01g0829900"/>
</dbReference>
<dbReference type="Gramene" id="Os01t0829900-01">
    <property type="protein sequence ID" value="Os01t0829900-01"/>
    <property type="gene ID" value="Os01g0829900"/>
</dbReference>
<dbReference type="KEGG" id="dosa:Os01g0829900"/>
<dbReference type="eggNOG" id="ENOG502QQ2H">
    <property type="taxonomic scope" value="Eukaryota"/>
</dbReference>
<dbReference type="HOGENOM" id="CLU_015477_2_0_1"/>
<dbReference type="InParanoid" id="Q941V3"/>
<dbReference type="OMA" id="GRMMAFF"/>
<dbReference type="OrthoDB" id="627262at2759"/>
<dbReference type="Proteomes" id="UP000000763">
    <property type="component" value="Chromosome 1"/>
</dbReference>
<dbReference type="Proteomes" id="UP000059680">
    <property type="component" value="Chromosome 1"/>
</dbReference>
<dbReference type="GO" id="GO:0016020">
    <property type="term" value="C:membrane"/>
    <property type="evidence" value="ECO:0000318"/>
    <property type="project" value="GO_Central"/>
</dbReference>
<dbReference type="GO" id="GO:0035673">
    <property type="term" value="F:oligopeptide transmembrane transporter activity"/>
    <property type="evidence" value="ECO:0007669"/>
    <property type="project" value="InterPro"/>
</dbReference>
<dbReference type="InterPro" id="IPR004813">
    <property type="entry name" value="OPT"/>
</dbReference>
<dbReference type="InterPro" id="IPR045035">
    <property type="entry name" value="YSL-like"/>
</dbReference>
<dbReference type="NCBIfam" id="TIGR00728">
    <property type="entry name" value="OPT_sfam"/>
    <property type="match status" value="1"/>
</dbReference>
<dbReference type="PANTHER" id="PTHR31645:SF14">
    <property type="entry name" value="METAL-NICOTIANAMINE TRANSPORTER YSL18-RELATED"/>
    <property type="match status" value="1"/>
</dbReference>
<dbReference type="PANTHER" id="PTHR31645">
    <property type="entry name" value="OLIGOPEPTIDE TRANSPORTER YGL114W-RELATED"/>
    <property type="match status" value="1"/>
</dbReference>
<dbReference type="Pfam" id="PF03169">
    <property type="entry name" value="OPT"/>
    <property type="match status" value="1"/>
</dbReference>
<name>YSL18_ORYSJ</name>
<reference key="1">
    <citation type="journal article" date="2004" name="Plant J.">
        <title>OsYSL2 is a rice metal-nicotianamine transporter that is regulated by iron and expressed in the phloem.</title>
        <authorList>
            <person name="Koike S."/>
            <person name="Inoue H."/>
            <person name="Mizuno D."/>
            <person name="Takahashi M."/>
            <person name="Nakanishi H."/>
            <person name="Mori S."/>
            <person name="Nishizawa N.K."/>
        </authorList>
    </citation>
    <scope>NUCLEOTIDE SEQUENCE [MRNA]</scope>
    <scope>GENE FAMILY</scope>
    <scope>NOMENCLATURE</scope>
    <source>
        <strain>cv. Nipponbare</strain>
    </source>
</reference>
<reference key="2">
    <citation type="submission" date="2003-12" db="EMBL/GenBank/DDBJ databases">
        <title>Sequence of iron-phytosiderophore transporter protein yellow stripe 1 protein gene.</title>
        <authorList>
            <person name="Zhu Z."/>
        </authorList>
    </citation>
    <scope>NUCLEOTIDE SEQUENCE [MRNA]</scope>
</reference>
<reference key="3">
    <citation type="journal article" date="2002" name="Nature">
        <title>The genome sequence and structure of rice chromosome 1.</title>
        <authorList>
            <person name="Sasaki T."/>
            <person name="Matsumoto T."/>
            <person name="Yamamoto K."/>
            <person name="Sakata K."/>
            <person name="Baba T."/>
            <person name="Katayose Y."/>
            <person name="Wu J."/>
            <person name="Niimura Y."/>
            <person name="Cheng Z."/>
            <person name="Nagamura Y."/>
            <person name="Antonio B.A."/>
            <person name="Kanamori H."/>
            <person name="Hosokawa S."/>
            <person name="Masukawa M."/>
            <person name="Arikawa K."/>
            <person name="Chiden Y."/>
            <person name="Hayashi M."/>
            <person name="Okamoto M."/>
            <person name="Ando T."/>
            <person name="Aoki H."/>
            <person name="Arita K."/>
            <person name="Hamada M."/>
            <person name="Harada C."/>
            <person name="Hijishita S."/>
            <person name="Honda M."/>
            <person name="Ichikawa Y."/>
            <person name="Idonuma A."/>
            <person name="Iijima M."/>
            <person name="Ikeda M."/>
            <person name="Ikeno M."/>
            <person name="Ito S."/>
            <person name="Ito T."/>
            <person name="Ito Y."/>
            <person name="Ito Y."/>
            <person name="Iwabuchi A."/>
            <person name="Kamiya K."/>
            <person name="Karasawa W."/>
            <person name="Katagiri S."/>
            <person name="Kikuta A."/>
            <person name="Kobayashi N."/>
            <person name="Kono I."/>
            <person name="Machita K."/>
            <person name="Maehara T."/>
            <person name="Mizuno H."/>
            <person name="Mizubayashi T."/>
            <person name="Mukai Y."/>
            <person name="Nagasaki H."/>
            <person name="Nakashima M."/>
            <person name="Nakama Y."/>
            <person name="Nakamichi Y."/>
            <person name="Nakamura M."/>
            <person name="Namiki N."/>
            <person name="Negishi M."/>
            <person name="Ohta I."/>
            <person name="Ono N."/>
            <person name="Saji S."/>
            <person name="Sakai K."/>
            <person name="Shibata M."/>
            <person name="Shimokawa T."/>
            <person name="Shomura A."/>
            <person name="Song J."/>
            <person name="Takazaki Y."/>
            <person name="Terasawa K."/>
            <person name="Tsuji K."/>
            <person name="Waki K."/>
            <person name="Yamagata H."/>
            <person name="Yamane H."/>
            <person name="Yoshiki S."/>
            <person name="Yoshihara R."/>
            <person name="Yukawa K."/>
            <person name="Zhong H."/>
            <person name="Iwama H."/>
            <person name="Endo T."/>
            <person name="Ito H."/>
            <person name="Hahn J.H."/>
            <person name="Kim H.-I."/>
            <person name="Eun M.-Y."/>
            <person name="Yano M."/>
            <person name="Jiang J."/>
            <person name="Gojobori T."/>
        </authorList>
    </citation>
    <scope>NUCLEOTIDE SEQUENCE [LARGE SCALE GENOMIC DNA]</scope>
    <source>
        <strain>cv. Nipponbare</strain>
    </source>
</reference>
<reference key="4">
    <citation type="journal article" date="2005" name="Nature">
        <title>The map-based sequence of the rice genome.</title>
        <authorList>
            <consortium name="International rice genome sequencing project (IRGSP)"/>
        </authorList>
    </citation>
    <scope>NUCLEOTIDE SEQUENCE [LARGE SCALE GENOMIC DNA]</scope>
    <source>
        <strain>cv. Nipponbare</strain>
    </source>
</reference>
<reference key="5">
    <citation type="journal article" date="2008" name="Nucleic Acids Res.">
        <title>The rice annotation project database (RAP-DB): 2008 update.</title>
        <authorList>
            <consortium name="The rice annotation project (RAP)"/>
        </authorList>
    </citation>
    <scope>GENOME REANNOTATION</scope>
    <source>
        <strain>cv. Nipponbare</strain>
    </source>
</reference>
<reference key="6">
    <citation type="journal article" date="2013" name="Rice">
        <title>Improvement of the Oryza sativa Nipponbare reference genome using next generation sequence and optical map data.</title>
        <authorList>
            <person name="Kawahara Y."/>
            <person name="de la Bastide M."/>
            <person name="Hamilton J.P."/>
            <person name="Kanamori H."/>
            <person name="McCombie W.R."/>
            <person name="Ouyang S."/>
            <person name="Schwartz D.C."/>
            <person name="Tanaka T."/>
            <person name="Wu J."/>
            <person name="Zhou S."/>
            <person name="Childs K.L."/>
            <person name="Davidson R.M."/>
            <person name="Lin H."/>
            <person name="Quesada-Ocampo L."/>
            <person name="Vaillancourt B."/>
            <person name="Sakai H."/>
            <person name="Lee S.S."/>
            <person name="Kim J."/>
            <person name="Numa H."/>
            <person name="Itoh T."/>
            <person name="Buell C.R."/>
            <person name="Matsumoto T."/>
        </authorList>
    </citation>
    <scope>GENOME REANNOTATION</scope>
    <source>
        <strain>cv. Nipponbare</strain>
    </source>
</reference>
<reference key="7">
    <citation type="journal article" date="2003" name="Science">
        <title>Collection, mapping, and annotation of over 28,000 cDNA clones from japonica rice.</title>
        <authorList>
            <consortium name="The rice full-length cDNA consortium"/>
        </authorList>
    </citation>
    <scope>NUCLEOTIDE SEQUENCE [LARGE SCALE MRNA]</scope>
    <source>
        <strain>cv. Nipponbare</strain>
    </source>
</reference>
<comment type="function">
    <text evidence="1">May be involved in the transport of nicotianamine-chelated metals.</text>
</comment>
<comment type="subcellular location">
    <subcellularLocation>
        <location evidence="4">Membrane</location>
        <topology evidence="4">Multi-pass membrane protein</topology>
    </subcellularLocation>
</comment>
<comment type="similarity">
    <text evidence="4">Belongs to the YSL (TC 2.A.67.2) family.</text>
</comment>
<keyword id="KW-0472">Membrane</keyword>
<keyword id="KW-1185">Reference proteome</keyword>
<keyword id="KW-0812">Transmembrane</keyword>
<keyword id="KW-1133">Transmembrane helix</keyword>
<keyword id="KW-0813">Transport</keyword>
<evidence type="ECO:0000250" key="1"/>
<evidence type="ECO:0000255" key="2"/>
<evidence type="ECO:0000256" key="3">
    <source>
        <dbReference type="SAM" id="MobiDB-lite"/>
    </source>
</evidence>
<evidence type="ECO:0000305" key="4"/>
<accession>Q941V3</accession>
<accession>A0A0P0VA10</accession>
<accession>Q6R5L7</accession>
<protein>
    <recommendedName>
        <fullName>Probable metal-nicotianamine transporter YSL18</fullName>
    </recommendedName>
    <alternativeName>
        <fullName>Protein YELLOW STRIPE LIKE 18</fullName>
        <shortName>OsYSL18</shortName>
    </alternativeName>
</protein>
<gene>
    <name type="primary">YSL18</name>
    <name type="ordered locus">Os01g0829900</name>
    <name type="ordered locus">LOC_Os01g61390</name>
    <name type="ORF">B1088C09.39</name>
    <name type="ORF">P0446G04.12</name>
</gene>
<organism>
    <name type="scientific">Oryza sativa subsp. japonica</name>
    <name type="common">Rice</name>
    <dbReference type="NCBI Taxonomy" id="39947"/>
    <lineage>
        <taxon>Eukaryota</taxon>
        <taxon>Viridiplantae</taxon>
        <taxon>Streptophyta</taxon>
        <taxon>Embryophyta</taxon>
        <taxon>Tracheophyta</taxon>
        <taxon>Spermatophyta</taxon>
        <taxon>Magnoliopsida</taxon>
        <taxon>Liliopsida</taxon>
        <taxon>Poales</taxon>
        <taxon>Poaceae</taxon>
        <taxon>BOP clade</taxon>
        <taxon>Oryzoideae</taxon>
        <taxon>Oryzeae</taxon>
        <taxon>Oryzinae</taxon>
        <taxon>Oryza</taxon>
        <taxon>Oryza sativa</taxon>
    </lineage>
</organism>
<feature type="chain" id="PRO_0000363881" description="Probable metal-nicotianamine transporter YSL18">
    <location>
        <begin position="1"/>
        <end position="679"/>
    </location>
</feature>
<feature type="transmembrane region" description="Helical" evidence="2">
    <location>
        <begin position="29"/>
        <end position="49"/>
    </location>
</feature>
<feature type="transmembrane region" description="Helical" evidence="2">
    <location>
        <begin position="51"/>
        <end position="71"/>
    </location>
</feature>
<feature type="transmembrane region" description="Helical" evidence="2">
    <location>
        <begin position="101"/>
        <end position="121"/>
    </location>
</feature>
<feature type="transmembrane region" description="Helical" evidence="2">
    <location>
        <begin position="144"/>
        <end position="164"/>
    </location>
</feature>
<feature type="transmembrane region" description="Helical" evidence="2">
    <location>
        <begin position="211"/>
        <end position="231"/>
    </location>
</feature>
<feature type="transmembrane region" description="Helical" evidence="2">
    <location>
        <begin position="255"/>
        <end position="275"/>
    </location>
</feature>
<feature type="transmembrane region" description="Helical" evidence="2">
    <location>
        <begin position="309"/>
        <end position="329"/>
    </location>
</feature>
<feature type="transmembrane region" description="Helical" evidence="2">
    <location>
        <begin position="379"/>
        <end position="399"/>
    </location>
</feature>
<feature type="transmembrane region" description="Helical" evidence="2">
    <location>
        <begin position="407"/>
        <end position="427"/>
    </location>
</feature>
<feature type="transmembrane region" description="Helical" evidence="2">
    <location>
        <begin position="441"/>
        <end position="461"/>
    </location>
</feature>
<feature type="transmembrane region" description="Helical" evidence="2">
    <location>
        <begin position="497"/>
        <end position="517"/>
    </location>
</feature>
<feature type="transmembrane region" description="Helical" evidence="2">
    <location>
        <begin position="547"/>
        <end position="567"/>
    </location>
</feature>
<feature type="transmembrane region" description="Helical" evidence="2">
    <location>
        <begin position="593"/>
        <end position="613"/>
    </location>
</feature>
<feature type="transmembrane region" description="Helical" evidence="2">
    <location>
        <begin position="627"/>
        <end position="647"/>
    </location>
</feature>
<feature type="region of interest" description="Disordered" evidence="3">
    <location>
        <begin position="1"/>
        <end position="21"/>
    </location>
</feature>
<feature type="compositionally biased region" description="Basic and acidic residues" evidence="3">
    <location>
        <begin position="1"/>
        <end position="17"/>
    </location>
</feature>
<sequence length="679" mass="73819">MESVGDPRDGPSTERAFEGQPVPPWTEQVTLRAVVASVALGVALSSVMMNLVFTSGIIPSLNISAGLLGFFLLKAWTRLLDQLGSPGRPFTRQENAVVQTCVVACASMTYSGGFGSYLLAMDRKTAEKTSTGDDSSASVSEPEFGRMMAFFFLVSFVGLLAIVPMRKTMIIRHRLTFPSGSATAHLINSFHTPHGARQAKRQVSLVLRSSLASLFWSIFQWFYTGGPNCGFTSFPTFGLSAFNRGFYISLNGTYVGIGMISPHLINVSMLFGSIISWGIMRPYIRSKRGIWYDADLQETNLKSFSGYKVFCAIAMILGDGIFQLVAISLRTIHTVRHHQVAAETLRSFSDVDAMPRPVMSFDDRRRTQVFLREHIPSTFAISGYVVLATVSTVVIPLMYGQVRYYHVAAAYAFAPVLAFCNAYGTGVAETNFSAQYNKLVILMFASWIGIKNGGIVGSLVICGIVSSIVSTASDFMSDFKTSYLTLTSPRATLVSQVIGTAMGCVVNPAVFTVFHHFYEMNPNKTYQAPLAKIYRGIAVLGAGGLELPKYCLAISATFFVLALAVCAMREVAAHGKWRAEPYIPSVTGMAVSFLLVPAVSIDMCIGSLIVFLWNRNDKLGSQVFGPVLASGLICGDGLFSIPYALLARYDVTPPICIRFLGRVQNDKLDAFLASKAKAG</sequence>
<proteinExistence type="evidence at transcript level"/>